<proteinExistence type="inferred from homology"/>
<reference key="1">
    <citation type="journal article" date="1985" name="Proc. Natl. Acad. Sci. U.S.A.">
        <title>Complete nucleotide sequence of the genome of bovine leukemia virus: its evolutionary relationship to other retroviruses.</title>
        <authorList>
            <person name="Sagata N."/>
            <person name="Yasunaga T."/>
            <person name="Tsuzuku-Kawamura J."/>
            <person name="Ohishi K."/>
            <person name="Ogawa Y."/>
            <person name="Ikawa Y."/>
        </authorList>
    </citation>
    <scope>NUCLEOTIDE SEQUENCE [GENOMIC RNA]</scope>
</reference>
<evidence type="ECO:0000250" key="1">
    <source>
        <dbReference type="UniProtKB" id="P03345"/>
    </source>
</evidence>
<evidence type="ECO:0000250" key="2">
    <source>
        <dbReference type="UniProtKB" id="P0DOI1"/>
    </source>
</evidence>
<evidence type="ECO:0000250" key="3">
    <source>
        <dbReference type="UniProtKB" id="P10274"/>
    </source>
</evidence>
<evidence type="ECO:0000255" key="4"/>
<evidence type="ECO:0000255" key="5">
    <source>
        <dbReference type="PROSITE-ProRule" id="PRU00047"/>
    </source>
</evidence>
<evidence type="ECO:0000255" key="6">
    <source>
        <dbReference type="PROSITE-ProRule" id="PRU00275"/>
    </source>
</evidence>
<evidence type="ECO:0000305" key="7"/>
<keyword id="KW-0064">Aspartyl protease</keyword>
<keyword id="KW-0167">Capsid protein</keyword>
<keyword id="KW-0945">Host-virus interaction</keyword>
<keyword id="KW-0378">Hydrolase</keyword>
<keyword id="KW-0449">Lipoprotein</keyword>
<keyword id="KW-0479">Metal-binding</keyword>
<keyword id="KW-0519">Myristate</keyword>
<keyword id="KW-0597">Phosphoprotein</keyword>
<keyword id="KW-0645">Protease</keyword>
<keyword id="KW-0677">Repeat</keyword>
<keyword id="KW-0688">Ribosomal frameshifting</keyword>
<keyword id="KW-1198">Viral budding</keyword>
<keyword id="KW-1187">Viral budding via the host ESCRT complexes</keyword>
<keyword id="KW-0468">Viral matrix protein</keyword>
<keyword id="KW-0543">Viral nucleoprotein</keyword>
<keyword id="KW-1188">Viral release from host cell</keyword>
<keyword id="KW-0946">Virion</keyword>
<keyword id="KW-0862">Zinc</keyword>
<keyword id="KW-0863">Zinc-finger</keyword>
<dbReference type="EC" id="3.4.23.-" evidence="6"/>
<dbReference type="EMBL" id="K02120">
    <property type="status" value="NOT_ANNOTATED_CDS"/>
    <property type="molecule type" value="Genomic_RNA"/>
</dbReference>
<dbReference type="SMR" id="P0DOI0"/>
<dbReference type="GO" id="GO:0019013">
    <property type="term" value="C:viral nucleocapsid"/>
    <property type="evidence" value="ECO:0007669"/>
    <property type="project" value="UniProtKB-KW"/>
</dbReference>
<dbReference type="GO" id="GO:0004190">
    <property type="term" value="F:aspartic-type endopeptidase activity"/>
    <property type="evidence" value="ECO:0007669"/>
    <property type="project" value="UniProtKB-KW"/>
</dbReference>
<dbReference type="GO" id="GO:0003676">
    <property type="term" value="F:nucleic acid binding"/>
    <property type="evidence" value="ECO:0007669"/>
    <property type="project" value="InterPro"/>
</dbReference>
<dbReference type="GO" id="GO:0039660">
    <property type="term" value="F:structural constituent of virion"/>
    <property type="evidence" value="ECO:0007669"/>
    <property type="project" value="UniProtKB-KW"/>
</dbReference>
<dbReference type="GO" id="GO:0008270">
    <property type="term" value="F:zinc ion binding"/>
    <property type="evidence" value="ECO:0007669"/>
    <property type="project" value="UniProtKB-KW"/>
</dbReference>
<dbReference type="GO" id="GO:0006508">
    <property type="term" value="P:proteolysis"/>
    <property type="evidence" value="ECO:0007669"/>
    <property type="project" value="UniProtKB-KW"/>
</dbReference>
<dbReference type="GO" id="GO:0039702">
    <property type="term" value="P:viral budding via host ESCRT complex"/>
    <property type="evidence" value="ECO:0007669"/>
    <property type="project" value="UniProtKB-KW"/>
</dbReference>
<dbReference type="GO" id="GO:0075523">
    <property type="term" value="P:viral translational frameshifting"/>
    <property type="evidence" value="ECO:0007669"/>
    <property type="project" value="UniProtKB-KW"/>
</dbReference>
<dbReference type="FunFam" id="4.10.60.10:FF:000119">
    <property type="entry name" value="Gag polyprotein"/>
    <property type="match status" value="1"/>
</dbReference>
<dbReference type="FunFam" id="1.10.375.10:FF:000005">
    <property type="entry name" value="Gag-pro-pol polyprotein"/>
    <property type="match status" value="1"/>
</dbReference>
<dbReference type="Gene3D" id="1.10.1200.30">
    <property type="match status" value="1"/>
</dbReference>
<dbReference type="Gene3D" id="2.40.70.10">
    <property type="entry name" value="Acid Proteases"/>
    <property type="match status" value="1"/>
</dbReference>
<dbReference type="Gene3D" id="1.10.375.10">
    <property type="entry name" value="Human Immunodeficiency Virus Type 1 Capsid Protein"/>
    <property type="match status" value="1"/>
</dbReference>
<dbReference type="Gene3D" id="4.10.60.10">
    <property type="entry name" value="Zinc finger, CCHC-type"/>
    <property type="match status" value="1"/>
</dbReference>
<dbReference type="InterPro" id="IPR003139">
    <property type="entry name" value="D_retro_matrix"/>
</dbReference>
<dbReference type="InterPro" id="IPR045345">
    <property type="entry name" value="Gag_p24_C"/>
</dbReference>
<dbReference type="InterPro" id="IPR001995">
    <property type="entry name" value="Peptidase_A2_cat"/>
</dbReference>
<dbReference type="InterPro" id="IPR021109">
    <property type="entry name" value="Peptidase_aspartic_dom_sf"/>
</dbReference>
<dbReference type="InterPro" id="IPR050195">
    <property type="entry name" value="Primate_lentivir_Gag_pol-like"/>
</dbReference>
<dbReference type="InterPro" id="IPR018061">
    <property type="entry name" value="Retropepsins"/>
</dbReference>
<dbReference type="InterPro" id="IPR008916">
    <property type="entry name" value="Retrov_capsid_C"/>
</dbReference>
<dbReference type="InterPro" id="IPR008919">
    <property type="entry name" value="Retrov_capsid_N"/>
</dbReference>
<dbReference type="InterPro" id="IPR010999">
    <property type="entry name" value="Retrovr_matrix"/>
</dbReference>
<dbReference type="InterPro" id="IPR001878">
    <property type="entry name" value="Znf_CCHC"/>
</dbReference>
<dbReference type="InterPro" id="IPR036875">
    <property type="entry name" value="Znf_CCHC_sf"/>
</dbReference>
<dbReference type="PANTHER" id="PTHR40389">
    <property type="entry name" value="ENDOGENOUS RETROVIRUS GROUP K MEMBER 24 GAG POLYPROTEIN-RELATED"/>
    <property type="match status" value="1"/>
</dbReference>
<dbReference type="PANTHER" id="PTHR40389:SF3">
    <property type="entry name" value="IGE-BINDING PROTEIN"/>
    <property type="match status" value="1"/>
</dbReference>
<dbReference type="Pfam" id="PF02228">
    <property type="entry name" value="Gag_p19"/>
    <property type="match status" value="1"/>
</dbReference>
<dbReference type="Pfam" id="PF00607">
    <property type="entry name" value="Gag_p24"/>
    <property type="match status" value="1"/>
</dbReference>
<dbReference type="Pfam" id="PF19317">
    <property type="entry name" value="Gag_p24_C"/>
    <property type="match status" value="1"/>
</dbReference>
<dbReference type="Pfam" id="PF00077">
    <property type="entry name" value="RVP"/>
    <property type="match status" value="1"/>
</dbReference>
<dbReference type="Pfam" id="PF00098">
    <property type="entry name" value="zf-CCHC"/>
    <property type="match status" value="1"/>
</dbReference>
<dbReference type="SMART" id="SM00343">
    <property type="entry name" value="ZnF_C2HC"/>
    <property type="match status" value="2"/>
</dbReference>
<dbReference type="SUPFAM" id="SSF50630">
    <property type="entry name" value="Acid proteases"/>
    <property type="match status" value="1"/>
</dbReference>
<dbReference type="SUPFAM" id="SSF47836">
    <property type="entry name" value="Retroviral matrix proteins"/>
    <property type="match status" value="1"/>
</dbReference>
<dbReference type="SUPFAM" id="SSF47353">
    <property type="entry name" value="Retrovirus capsid dimerization domain-like"/>
    <property type="match status" value="1"/>
</dbReference>
<dbReference type="SUPFAM" id="SSF47943">
    <property type="entry name" value="Retrovirus capsid protein, N-terminal core domain"/>
    <property type="match status" value="1"/>
</dbReference>
<dbReference type="SUPFAM" id="SSF57756">
    <property type="entry name" value="Retrovirus zinc finger-like domains"/>
    <property type="match status" value="1"/>
</dbReference>
<dbReference type="PROSITE" id="PS50175">
    <property type="entry name" value="ASP_PROT_RETROV"/>
    <property type="match status" value="1"/>
</dbReference>
<dbReference type="PROSITE" id="PS00141">
    <property type="entry name" value="ASP_PROTEASE"/>
    <property type="match status" value="1"/>
</dbReference>
<dbReference type="PROSITE" id="PS50158">
    <property type="entry name" value="ZF_CCHC"/>
    <property type="match status" value="1"/>
</dbReference>
<organism>
    <name type="scientific">Bovine leukemia virus (isolate Japanese BLV-1)</name>
    <name type="common">BLV</name>
    <dbReference type="NCBI Taxonomy" id="11907"/>
    <lineage>
        <taxon>Viruses</taxon>
        <taxon>Riboviria</taxon>
        <taxon>Pararnavirae</taxon>
        <taxon>Artverviricota</taxon>
        <taxon>Revtraviricetes</taxon>
        <taxon>Ortervirales</taxon>
        <taxon>Retroviridae</taxon>
        <taxon>Orthoretrovirinae</taxon>
        <taxon>Deltaretrovirus</taxon>
        <taxon>Bovine leukemia virus</taxon>
    </lineage>
</organism>
<feature type="initiator methionine" description="Removed; by host" evidence="4">
    <location>
        <position position="1"/>
    </location>
</feature>
<feature type="chain" id="PRO_0000442570" description="Gag-Pro polyprotein">
    <location>
        <begin position="2"/>
        <end position="571"/>
    </location>
</feature>
<feature type="chain" id="PRO_0000442571" description="Matrix protein p15">
    <location>
        <begin position="2"/>
        <end position="109"/>
    </location>
</feature>
<feature type="chain" id="PRO_0000442572" description="Capsid protein p24">
    <location>
        <begin position="110"/>
        <end position="322"/>
    </location>
</feature>
<feature type="chain" id="PRO_0000442573" description="Nucleocapsid protein p12-pro">
    <location>
        <begin position="323"/>
        <end position="420"/>
    </location>
</feature>
<feature type="chain" id="PRO_0000442574" description="Protease">
    <location>
        <begin position="421"/>
        <end position="545"/>
    </location>
</feature>
<feature type="chain" id="PRO_0000442575" description="p13">
    <location>
        <begin position="546"/>
        <end position="571"/>
    </location>
</feature>
<feature type="repeat">
    <location>
        <begin position="342"/>
        <end position="362"/>
    </location>
</feature>
<feature type="repeat">
    <location>
        <begin position="367"/>
        <end position="387"/>
    </location>
</feature>
<feature type="zinc finger region" description="CCHC-type 1" evidence="5">
    <location>
        <begin position="345"/>
        <end position="362"/>
    </location>
</feature>
<feature type="zinc finger region" description="CCHC-type 2" evidence="5">
    <location>
        <begin position="370"/>
        <end position="387"/>
    </location>
</feature>
<feature type="short sequence motif" description="PPXY motif" evidence="2">
    <location>
        <begin position="100"/>
        <end position="103"/>
    </location>
</feature>
<feature type="active site" description="Protease; shared with dimeric partner" evidence="6">
    <location>
        <position position="453"/>
    </location>
</feature>
<feature type="site" description="Cleavage; by viral protease" evidence="1">
    <location>
        <begin position="109"/>
        <end position="110"/>
    </location>
</feature>
<feature type="site" description="Cleavage; by viral protease" evidence="1">
    <location>
        <begin position="323"/>
        <end position="324"/>
    </location>
</feature>
<feature type="site" description="Cleavage; by viral protease" evidence="1">
    <location>
        <begin position="420"/>
        <end position="421"/>
    </location>
</feature>
<feature type="site" description="Cleavage; by viral protease" evidence="1">
    <location>
        <begin position="545"/>
        <end position="546"/>
    </location>
</feature>
<feature type="lipid moiety-binding region" description="N-myristoyl glycine; by host" evidence="4">
    <location>
        <position position="2"/>
    </location>
</feature>
<name>PRO_BLVJ</name>
<comment type="function">
    <molecule>Gag-Pro polyprotein</molecule>
    <text evidence="1">The matrix domain targets Gag, Gag-Pro and Gag-Pro-Pol polyproteins to the plasma membrane via a multipartite membrane binding signal, that includes its myristoylated N-terminus.</text>
</comment>
<comment type="function">
    <molecule>Matrix protein p15</molecule>
    <text evidence="1">Matrix protein.</text>
</comment>
<comment type="function">
    <molecule>Capsid protein p24</molecule>
    <text evidence="3">Forms the spherical core of the virus that encapsulates the genomic RNA-nucleocapsid complex.</text>
</comment>
<comment type="function">
    <molecule>Nucleocapsid protein p12-pro</molecule>
    <text evidence="3">Binds strongly to viral nucleic acids and promote their aggregation. Also destabilizes the nucleic acids duplexes via highly structured zinc-binding motifs.</text>
</comment>
<comment type="function">
    <molecule>Protease</molecule>
    <text evidence="6">The aspartyl protease mediates proteolytic cleavages of Gag and Gag-Pol polyproteins during or shortly after the release of the virion from the plasma membrane. Cleavages take place as an ordered, step-wise cascade to yield mature proteins. This process is called maturation. Displays maximal activity during the budding process just prior to particle release from the cell.</text>
</comment>
<comment type="subunit">
    <molecule>Gag-Pro polyprotein</molecule>
    <text evidence="1">Homodimer; the homodimers are part of the immature particles. Interacts with human TSG101 and NEDD4; these interactions are essential for budding and release of viral particles.</text>
</comment>
<comment type="subunit">
    <molecule>Matrix protein p15</molecule>
    <text evidence="1">Homodimer; further assembles as homohexamers.</text>
</comment>
<comment type="subcellular location">
    <molecule>Matrix protein p15</molecule>
    <subcellularLocation>
        <location evidence="1">Virion</location>
    </subcellularLocation>
</comment>
<comment type="subcellular location">
    <molecule>Capsid protein p24</molecule>
    <subcellularLocation>
        <location evidence="1">Virion</location>
    </subcellularLocation>
</comment>
<comment type="subcellular location">
    <molecule>Nucleocapsid protein p12-pro</molecule>
    <subcellularLocation>
        <location evidence="1">Virion</location>
    </subcellularLocation>
</comment>
<comment type="alternative products">
    <event type="ribosomal frameshifting"/>
    <isoform>
        <id>P0DOI0-1</id>
        <name>Gag-Pro polyprotein</name>
        <sequence type="displayed"/>
    </isoform>
    <isoform>
        <id>P03344-1</id>
        <name>Gag polyprotein</name>
        <sequence type="external"/>
    </isoform>
    <isoform>
        <id>P03361-1</id>
        <name>Gag-Pro-Pol polyprotein</name>
        <sequence type="external"/>
    </isoform>
</comment>
<comment type="domain">
    <text evidence="1">Gag polyprotein: Late-budding domains (L domains) are short sequence motifs essential for viral particle release. They can occur individually or in close proximity within structural proteins. They interacts with sorting cellular proteins of the multivesicular body (MVB) pathway. Most of these proteins are class E vacuolar protein sorting factors belonging to ESCRT-I, ESCRT-II or ESCRT-III complexes. Matrix protein p15 contains one L domain: a PPXY motif which binds to the WW domains of the ubiquitin ligase NEDD4.</text>
</comment>
<comment type="PTM">
    <molecule>Gag-Pro polyprotein</molecule>
    <text evidence="3">Specific enzymatic cleavages by the viral protease yield mature proteins. The polyprotein is cleaved during and after budding, this process is termed maturation. The protease is autoproteolytically processed at its N- and C-termini.</text>
</comment>
<comment type="PTM">
    <molecule>Gag-Pro polyprotein</molecule>
    <text evidence="1 3">Myristoylated. Myristoylation of the matrix (MA) domain mediates the transport and binding of Gag polyproteins to the host plasma membrane and is required for the assembly of viral particles.</text>
</comment>
<comment type="miscellaneous">
    <molecule>Isoform Gag-Pro polyprotein</molecule>
    <text evidence="7">Produced by -1 ribosomal frameshifting between gag-pro.</text>
</comment>
<accession>P0DOI0</accession>
<protein>
    <recommendedName>
        <fullName>Gag-Pro polyprotein</fullName>
    </recommendedName>
    <component>
        <recommendedName>
            <fullName>Matrix protein p15</fullName>
            <shortName>MA</shortName>
        </recommendedName>
    </component>
    <component>
        <recommendedName>
            <fullName>Capsid protein p24</fullName>
            <shortName>CA</shortName>
        </recommendedName>
    </component>
    <component>
        <recommendedName>
            <fullName>Nucleocapsid protein p12-pro</fullName>
        </recommendedName>
    </component>
    <component>
        <recommendedName>
            <fullName>Protease</fullName>
            <ecNumber evidence="6">3.4.23.-</ecNumber>
        </recommendedName>
    </component>
    <component>
        <recommendedName>
            <fullName>p13</fullName>
        </recommendedName>
    </component>
</protein>
<organismHost>
    <name type="scientific">Bos taurus</name>
    <name type="common">Bovine</name>
    <dbReference type="NCBI Taxonomy" id="9913"/>
</organismHost>
<sequence length="571" mass="61933">MGNSPSYNPPAGISPSDWLNLLQSAQRLNPRPSPSDFTDLKNYIHWFHKTQKKPWTFTSGGPTSCPPGRFGRVPLVLATLNEVLSNEGGAPGASAPEEQPPPYDPPAILPIISEGNRNRHRAWALRELQDIKKEIENKAPGSQVWIQTLRLAILQADPTPADLEQLCQYIASPVDQTAHMTSLTAAIAAAEAANTLQGFNPKTGTLTQQSAQPNAGDLRSQYQNLWLQAGKNLPTRPSAPWSTIVQGPAESSVEFVNRLQISLADNLPDGVPKEPIIDSLSYANANRECQQILQGRGPVAAVGQKLQACAQWAPKNKQPALLVHTPGPKMPGPRQPAPKRPPPGPCYRCLKEGHWARDCPTKATGPPPGPCPICKDPSHWKRDCPTLKSKNKLIEGGLSAPQTITPITDSLSEAELECLLSIPLARSRPSVAVYLSGPWLQPSQNQALMLVDTGAENTVLPQNWLVRDYPRIPAAVLGAGGVSRNRYNWLQGPLTLALKPEGPFITIPKILVDTSDKWQILGRDVPSRLQASISIPEEVRPPVVGVLDTPPSHIGLEHLPPPPEVPQFPLN</sequence>